<sequence>MPVAEIKNATQQPSSTNRVQAYAKLEFEKFSFFVQTLQVTMGRKASNSSDCDVHLGDTKAISRQHAKIFYSFPNQRFEISVMGKNGAFVDGEFVERGKSVPLRSGTRVQIGQISFSFLLPEGSEEDGHLKETGITPLSLQQGKIAYSDEFGGKPTGSFHTVTSNQEKDLLFSHIKHESDLPLGLSPADTNISNATSIIEHPDAANAHTLASLNQPPKHLTVSPSSIQRLSPQPYVRPTSDERPIETDSSVSAPKVANHDEELKQGKSTSPSDTVLHPDLNGSPDTGDATQKPNLSYANLIARTLIANPNKKMTLGDICEWIANNWSYYRHQPPAWHNSIRHNLSLNKAFIRIPRRQNEPGKGSFWMLDPSYIDQFEGNFFRRTKKPTPSATPAAHPDTARENELAAIQTKGISAGKTEQLNPQKETSRSKTHTSRGENVEDRPQSLLQNGIQPIIMRDGKLALNPEFFKNANGEQQAPNEQAVQAISLLQQHINKQLGPAAANNPEQATAIANALAVALAQKLQKQQTQMQGPQQVQQQAKRRKAYTSQQLNPAPTAMPHPNITSPSPSISVTQRPAVNVGPPPYVRPSAPSKLPDTRQSIGDPLPPGAMANVSAGPSSVRSSSYNSTASESKSEITSHQNLHTIPINKPFTSDRPLYSSPNDTLERVETGNQGQRMNSIGNASSFSKRDIMENENGSFDTNAKNGNNVDDSSSVRGMNLPSNSSDALRGVKRPLDETSSSYT</sequence>
<comment type="function">
    <text evidence="5">Acts as a transcriptional activator for ribosomal protein genes (RPG) that contain a HomolE UAS (upstream activating sequence) in addition to a HomolD promoter element; HomolD plays the role of a TATA box in RPG promoters that do not contain a canonical TATA sequence (PubMed:37298423). Binds to HomolE elements with consensus sequence 3'-ACCCTACCCT-5' (or its inverted form AGGGTAGGGT) (PubMed:37298423).</text>
</comment>
<comment type="subcellular location">
    <subcellularLocation>
        <location evidence="2">Nucleus</location>
    </subcellularLocation>
</comment>
<comment type="disruption phenotype">
    <text evidence="4">Decreases cell population growth rate and increases cell-length; elongated cells are occasionally multiseptate (PubMed:15777722). Resistance to methyl methanesulfonate (PubMed:15777722).</text>
</comment>
<keyword id="KW-0010">Activator</keyword>
<keyword id="KW-0131">Cell cycle</keyword>
<keyword id="KW-0132">Cell division</keyword>
<keyword id="KW-0238">DNA-binding</keyword>
<keyword id="KW-0498">Mitosis</keyword>
<keyword id="KW-0539">Nucleus</keyword>
<keyword id="KW-1185">Reference proteome</keyword>
<keyword id="KW-0717">Septation</keyword>
<keyword id="KW-0804">Transcription</keyword>
<keyword id="KW-0805">Transcription regulation</keyword>
<organism>
    <name type="scientific">Schizosaccharomyces pombe (strain 972 / ATCC 24843)</name>
    <name type="common">Fission yeast</name>
    <dbReference type="NCBI Taxonomy" id="284812"/>
    <lineage>
        <taxon>Eukaryota</taxon>
        <taxon>Fungi</taxon>
        <taxon>Dikarya</taxon>
        <taxon>Ascomycota</taxon>
        <taxon>Taphrinomycotina</taxon>
        <taxon>Schizosaccharomycetes</taxon>
        <taxon>Schizosaccharomycetales</taxon>
        <taxon>Schizosaccharomycetaceae</taxon>
        <taxon>Schizosaccharomyces</taxon>
    </lineage>
</organism>
<feature type="chain" id="PRO_0000091900" description="Fork head transcription factor 1">
    <location>
        <begin position="1"/>
        <end position="743"/>
    </location>
</feature>
<feature type="domain" description="FHA" evidence="1">
    <location>
        <begin position="39"/>
        <end position="94"/>
    </location>
</feature>
<feature type="DNA-binding region" description="Fork-head" evidence="2">
    <location>
        <begin position="291"/>
        <end position="385"/>
    </location>
</feature>
<feature type="region of interest" description="Disordered" evidence="3">
    <location>
        <begin position="214"/>
        <end position="291"/>
    </location>
</feature>
<feature type="region of interest" description="Disordered" evidence="3">
    <location>
        <begin position="411"/>
        <end position="450"/>
    </location>
</feature>
<feature type="region of interest" description="Disordered" evidence="3">
    <location>
        <begin position="529"/>
        <end position="743"/>
    </location>
</feature>
<feature type="compositionally biased region" description="Polar residues" evidence="3">
    <location>
        <begin position="221"/>
        <end position="230"/>
    </location>
</feature>
<feature type="compositionally biased region" description="Basic and acidic residues" evidence="3">
    <location>
        <begin position="434"/>
        <end position="443"/>
    </location>
</feature>
<feature type="compositionally biased region" description="Low complexity" evidence="3">
    <location>
        <begin position="529"/>
        <end position="539"/>
    </location>
</feature>
<feature type="compositionally biased region" description="Polar residues" evidence="3">
    <location>
        <begin position="562"/>
        <end position="576"/>
    </location>
</feature>
<feature type="compositionally biased region" description="Low complexity" evidence="3">
    <location>
        <begin position="614"/>
        <end position="624"/>
    </location>
</feature>
<feature type="compositionally biased region" description="Polar residues" evidence="3">
    <location>
        <begin position="625"/>
        <end position="643"/>
    </location>
</feature>
<feature type="compositionally biased region" description="Polar residues" evidence="3">
    <location>
        <begin position="670"/>
        <end position="686"/>
    </location>
</feature>
<feature type="compositionally biased region" description="Polar residues" evidence="3">
    <location>
        <begin position="695"/>
        <end position="726"/>
    </location>
</feature>
<proteinExistence type="inferred from homology"/>
<name>FKHL1_SCHPO</name>
<evidence type="ECO:0000255" key="1">
    <source>
        <dbReference type="PROSITE-ProRule" id="PRU00086"/>
    </source>
</evidence>
<evidence type="ECO:0000255" key="2">
    <source>
        <dbReference type="PROSITE-ProRule" id="PRU00089"/>
    </source>
</evidence>
<evidence type="ECO:0000256" key="3">
    <source>
        <dbReference type="SAM" id="MobiDB-lite"/>
    </source>
</evidence>
<evidence type="ECO:0000269" key="4">
    <source>
    </source>
</evidence>
<evidence type="ECO:0000269" key="5">
    <source>
    </source>
</evidence>
<evidence type="ECO:0000303" key="6">
    <source>
    </source>
</evidence>
<evidence type="ECO:0000312" key="7">
    <source>
        <dbReference type="PomBase" id="SPAC1142.08"/>
    </source>
</evidence>
<gene>
    <name evidence="7" type="primary">fhl1</name>
    <name evidence="7" type="ORF">SPAC1142.08</name>
    <name evidence="7" type="ORF">SPAC8C9.01</name>
</gene>
<protein>
    <recommendedName>
        <fullName>Fork head transcription factor 1</fullName>
    </recommendedName>
    <alternativeName>
        <fullName evidence="7">DNA-binding forkhead transcription factor for ribosomal proteins fhl1</fullName>
    </alternativeName>
    <alternativeName>
        <fullName evidence="6">HomolE-binding protein</fullName>
        <shortName evidence="6">HEBP</shortName>
    </alternativeName>
</protein>
<accession>O14270</accession>
<accession>Q9P7F6</accession>
<dbReference type="EMBL" id="CU329670">
    <property type="protein sequence ID" value="CAB77015.1"/>
    <property type="molecule type" value="Genomic_DNA"/>
</dbReference>
<dbReference type="PIR" id="T39138">
    <property type="entry name" value="T39138"/>
</dbReference>
<dbReference type="RefSeq" id="NP_594272.1">
    <property type="nucleotide sequence ID" value="NM_001019695.2"/>
</dbReference>
<dbReference type="BioGRID" id="278051">
    <property type="interactions" value="86"/>
</dbReference>
<dbReference type="FunCoup" id="O14270">
    <property type="interactions" value="275"/>
</dbReference>
<dbReference type="STRING" id="284812.O14270"/>
<dbReference type="iPTMnet" id="O14270"/>
<dbReference type="PaxDb" id="4896-SPAC1142.08.1"/>
<dbReference type="EnsemblFungi" id="SPAC1142.08.1">
    <property type="protein sequence ID" value="SPAC1142.08.1:pep"/>
    <property type="gene ID" value="SPAC1142.08"/>
</dbReference>
<dbReference type="GeneID" id="2541552"/>
<dbReference type="KEGG" id="spo:2541552"/>
<dbReference type="PomBase" id="SPAC1142.08">
    <property type="gene designation" value="fhl1"/>
</dbReference>
<dbReference type="VEuPathDB" id="FungiDB:SPAC1142.08"/>
<dbReference type="eggNOG" id="KOG2294">
    <property type="taxonomic scope" value="Eukaryota"/>
</dbReference>
<dbReference type="HOGENOM" id="CLU_373910_0_0_1"/>
<dbReference type="InParanoid" id="O14270"/>
<dbReference type="OMA" id="DICEWIS"/>
<dbReference type="PhylomeDB" id="O14270"/>
<dbReference type="PRO" id="PR:O14270"/>
<dbReference type="Proteomes" id="UP000002485">
    <property type="component" value="Chromosome I"/>
</dbReference>
<dbReference type="GO" id="GO:0005634">
    <property type="term" value="C:nucleus"/>
    <property type="evidence" value="ECO:0000314"/>
    <property type="project" value="PomBase"/>
</dbReference>
<dbReference type="GO" id="GO:0001228">
    <property type="term" value="F:DNA-binding transcription activator activity, RNA polymerase II-specific"/>
    <property type="evidence" value="ECO:0000315"/>
    <property type="project" value="PomBase"/>
</dbReference>
<dbReference type="GO" id="GO:0000978">
    <property type="term" value="F:RNA polymerase II cis-regulatory region sequence-specific DNA binding"/>
    <property type="evidence" value="ECO:0000255"/>
    <property type="project" value="PomBase"/>
</dbReference>
<dbReference type="GO" id="GO:0043565">
    <property type="term" value="F:sequence-specific DNA binding"/>
    <property type="evidence" value="ECO:0000318"/>
    <property type="project" value="GO_Central"/>
</dbReference>
<dbReference type="GO" id="GO:0000917">
    <property type="term" value="P:division septum assembly"/>
    <property type="evidence" value="ECO:0007669"/>
    <property type="project" value="UniProtKB-KW"/>
</dbReference>
<dbReference type="GO" id="GO:0060963">
    <property type="term" value="P:positive regulation of ribosomal protein gene transcription by RNA polymerase II"/>
    <property type="evidence" value="ECO:0000315"/>
    <property type="project" value="PomBase"/>
</dbReference>
<dbReference type="GO" id="GO:0006355">
    <property type="term" value="P:regulation of DNA-templated transcription"/>
    <property type="evidence" value="ECO:0000318"/>
    <property type="project" value="GO_Central"/>
</dbReference>
<dbReference type="CDD" id="cd00059">
    <property type="entry name" value="FH_FOX"/>
    <property type="match status" value="1"/>
</dbReference>
<dbReference type="CDD" id="cd22701">
    <property type="entry name" value="FHA_FKH1-like"/>
    <property type="match status" value="1"/>
</dbReference>
<dbReference type="FunFam" id="1.10.10.10:FF:000135">
    <property type="entry name" value="forkhead box protein G1"/>
    <property type="match status" value="1"/>
</dbReference>
<dbReference type="Gene3D" id="2.60.200.20">
    <property type="match status" value="1"/>
</dbReference>
<dbReference type="Gene3D" id="1.10.10.10">
    <property type="entry name" value="Winged helix-like DNA-binding domain superfamily/Winged helix DNA-binding domain"/>
    <property type="match status" value="1"/>
</dbReference>
<dbReference type="InterPro" id="IPR000253">
    <property type="entry name" value="FHA_dom"/>
</dbReference>
<dbReference type="InterPro" id="IPR045178">
    <property type="entry name" value="Fhl1/FHA1"/>
</dbReference>
<dbReference type="InterPro" id="IPR001766">
    <property type="entry name" value="Fork_head_dom"/>
</dbReference>
<dbReference type="InterPro" id="IPR008984">
    <property type="entry name" value="SMAD_FHA_dom_sf"/>
</dbReference>
<dbReference type="InterPro" id="IPR036388">
    <property type="entry name" value="WH-like_DNA-bd_sf"/>
</dbReference>
<dbReference type="InterPro" id="IPR036390">
    <property type="entry name" value="WH_DNA-bd_sf"/>
</dbReference>
<dbReference type="PANTHER" id="PTHR21712">
    <property type="entry name" value="PRE-RRNA-PROCESSING PROTEIN FHL1"/>
    <property type="match status" value="1"/>
</dbReference>
<dbReference type="PANTHER" id="PTHR21712:SF29">
    <property type="entry name" value="PRE-RRNA-PROCESSING PROTEIN FHL1"/>
    <property type="match status" value="1"/>
</dbReference>
<dbReference type="Pfam" id="PF00498">
    <property type="entry name" value="FHA"/>
    <property type="match status" value="1"/>
</dbReference>
<dbReference type="Pfam" id="PF00250">
    <property type="entry name" value="Forkhead"/>
    <property type="match status" value="1"/>
</dbReference>
<dbReference type="PRINTS" id="PR00053">
    <property type="entry name" value="FORKHEAD"/>
</dbReference>
<dbReference type="SMART" id="SM00339">
    <property type="entry name" value="FH"/>
    <property type="match status" value="1"/>
</dbReference>
<dbReference type="SMART" id="SM00240">
    <property type="entry name" value="FHA"/>
    <property type="match status" value="1"/>
</dbReference>
<dbReference type="SUPFAM" id="SSF49879">
    <property type="entry name" value="SMAD/FHA domain"/>
    <property type="match status" value="1"/>
</dbReference>
<dbReference type="SUPFAM" id="SSF46785">
    <property type="entry name" value="Winged helix' DNA-binding domain"/>
    <property type="match status" value="1"/>
</dbReference>
<dbReference type="PROSITE" id="PS50006">
    <property type="entry name" value="FHA_DOMAIN"/>
    <property type="match status" value="1"/>
</dbReference>
<dbReference type="PROSITE" id="PS50039">
    <property type="entry name" value="FORK_HEAD_3"/>
    <property type="match status" value="1"/>
</dbReference>
<reference key="1">
    <citation type="journal article" date="2002" name="Nature">
        <title>The genome sequence of Schizosaccharomyces pombe.</title>
        <authorList>
            <person name="Wood V."/>
            <person name="Gwilliam R."/>
            <person name="Rajandream M.A."/>
            <person name="Lyne M.H."/>
            <person name="Lyne R."/>
            <person name="Stewart A."/>
            <person name="Sgouros J.G."/>
            <person name="Peat N."/>
            <person name="Hayles J."/>
            <person name="Baker S.G."/>
            <person name="Basham D."/>
            <person name="Bowman S."/>
            <person name="Brooks K."/>
            <person name="Brown D."/>
            <person name="Brown S."/>
            <person name="Chillingworth T."/>
            <person name="Churcher C.M."/>
            <person name="Collins M."/>
            <person name="Connor R."/>
            <person name="Cronin A."/>
            <person name="Davis P."/>
            <person name="Feltwell T."/>
            <person name="Fraser A."/>
            <person name="Gentles S."/>
            <person name="Goble A."/>
            <person name="Hamlin N."/>
            <person name="Harris D.E."/>
            <person name="Hidalgo J."/>
            <person name="Hodgson G."/>
            <person name="Holroyd S."/>
            <person name="Hornsby T."/>
            <person name="Howarth S."/>
            <person name="Huckle E.J."/>
            <person name="Hunt S."/>
            <person name="Jagels K."/>
            <person name="James K.D."/>
            <person name="Jones L."/>
            <person name="Jones M."/>
            <person name="Leather S."/>
            <person name="McDonald S."/>
            <person name="McLean J."/>
            <person name="Mooney P."/>
            <person name="Moule S."/>
            <person name="Mungall K.L."/>
            <person name="Murphy L.D."/>
            <person name="Niblett D."/>
            <person name="Odell C."/>
            <person name="Oliver K."/>
            <person name="O'Neil S."/>
            <person name="Pearson D."/>
            <person name="Quail M.A."/>
            <person name="Rabbinowitsch E."/>
            <person name="Rutherford K.M."/>
            <person name="Rutter S."/>
            <person name="Saunders D."/>
            <person name="Seeger K."/>
            <person name="Sharp S."/>
            <person name="Skelton J."/>
            <person name="Simmonds M.N."/>
            <person name="Squares R."/>
            <person name="Squares S."/>
            <person name="Stevens K."/>
            <person name="Taylor K."/>
            <person name="Taylor R.G."/>
            <person name="Tivey A."/>
            <person name="Walsh S.V."/>
            <person name="Warren T."/>
            <person name="Whitehead S."/>
            <person name="Woodward J.R."/>
            <person name="Volckaert G."/>
            <person name="Aert R."/>
            <person name="Robben J."/>
            <person name="Grymonprez B."/>
            <person name="Weltjens I."/>
            <person name="Vanstreels E."/>
            <person name="Rieger M."/>
            <person name="Schaefer M."/>
            <person name="Mueller-Auer S."/>
            <person name="Gabel C."/>
            <person name="Fuchs M."/>
            <person name="Duesterhoeft A."/>
            <person name="Fritzc C."/>
            <person name="Holzer E."/>
            <person name="Moestl D."/>
            <person name="Hilbert H."/>
            <person name="Borzym K."/>
            <person name="Langer I."/>
            <person name="Beck A."/>
            <person name="Lehrach H."/>
            <person name="Reinhardt R."/>
            <person name="Pohl T.M."/>
            <person name="Eger P."/>
            <person name="Zimmermann W."/>
            <person name="Wedler H."/>
            <person name="Wambutt R."/>
            <person name="Purnelle B."/>
            <person name="Goffeau A."/>
            <person name="Cadieu E."/>
            <person name="Dreano S."/>
            <person name="Gloux S."/>
            <person name="Lelaure V."/>
            <person name="Mottier S."/>
            <person name="Galibert F."/>
            <person name="Aves S.J."/>
            <person name="Xiang Z."/>
            <person name="Hunt C."/>
            <person name="Moore K."/>
            <person name="Hurst S.M."/>
            <person name="Lucas M."/>
            <person name="Rochet M."/>
            <person name="Gaillardin C."/>
            <person name="Tallada V.A."/>
            <person name="Garzon A."/>
            <person name="Thode G."/>
            <person name="Daga R.R."/>
            <person name="Cruzado L."/>
            <person name="Jimenez J."/>
            <person name="Sanchez M."/>
            <person name="del Rey F."/>
            <person name="Benito J."/>
            <person name="Dominguez A."/>
            <person name="Revuelta J.L."/>
            <person name="Moreno S."/>
            <person name="Armstrong J."/>
            <person name="Forsburg S.L."/>
            <person name="Cerutti L."/>
            <person name="Lowe T."/>
            <person name="McCombie W.R."/>
            <person name="Paulsen I."/>
            <person name="Potashkin J."/>
            <person name="Shpakovski G.V."/>
            <person name="Ussery D."/>
            <person name="Barrell B.G."/>
            <person name="Nurse P."/>
        </authorList>
    </citation>
    <scope>NUCLEOTIDE SEQUENCE [LARGE SCALE GENOMIC DNA]</scope>
    <source>
        <strain>972 / ATCC 24843</strain>
    </source>
</reference>
<reference key="2">
    <citation type="journal article" date="2005" name="Gene">
        <title>Characterisation of two novel fork-head gene homologues of Schizosaccharomyces pombe: their involvement in cell cycle and sexual differentiation.</title>
        <authorList>
            <person name="Szilagyi Z."/>
            <person name="Batta G."/>
            <person name="Enczi K."/>
            <person name="Sipiczki M."/>
        </authorList>
    </citation>
    <scope>DISRUPTION PHENOTYPE</scope>
</reference>
<reference key="3">
    <citation type="journal article" date="2023" name="Int. J. Mol. Sci.">
        <title>The Product of the Fission Yeast fhl1 Gene Binds to the HomolE Box and Activates In Vitro Transcription of Ribosomal Protein Genes.</title>
        <authorList>
            <person name="Maldonado E."/>
            <person name="Morales-Pison S."/>
            <person name="Urbina F."/>
            <person name="Arias C."/>
            <person name="Castillo C."/>
            <person name="Jara L."/>
            <person name="Solari A."/>
        </authorList>
    </citation>
    <scope>FUNCTION</scope>
</reference>